<sequence>MSEIKDVIVQGLWKNNSALVQLLGLCPLLAVTSTATNALGLGLATTLVLTLTNLTISTLRHWTPAEIRIPIYVMIIASVVSAVQMLINAYAFGLYQSLGIFIPLIVTNCIVVGRAEAFAAKKGPALSALDGFSIGMGATCAMFVLGSLREIIGNGTLFDGADALLGSWAKVLRVEIFHTDSPFLLAMLPPGAFIGLGLMLAGKYLIDERMKKRRTEAAAERALPNGETGNV</sequence>
<reference key="1">
    <citation type="journal article" date="2011" name="Proc. Natl. Acad. Sci. U.S.A.">
        <title>Genomic anatomy of Escherichia coli O157:H7 outbreaks.</title>
        <authorList>
            <person name="Eppinger M."/>
            <person name="Mammel M.K."/>
            <person name="Leclerc J.E."/>
            <person name="Ravel J."/>
            <person name="Cebula T.A."/>
        </authorList>
    </citation>
    <scope>NUCLEOTIDE SEQUENCE [LARGE SCALE GENOMIC DNA]</scope>
    <source>
        <strain>EC4115 / EHEC</strain>
    </source>
</reference>
<protein>
    <recommendedName>
        <fullName evidence="1">Ion-translocating oxidoreductase complex subunit E</fullName>
        <ecNumber evidence="1">7.-.-.-</ecNumber>
    </recommendedName>
    <alternativeName>
        <fullName evidence="1">Rsx electron transport complex subunit E</fullName>
    </alternativeName>
</protein>
<name>RSXE_ECO5E</name>
<organism>
    <name type="scientific">Escherichia coli O157:H7 (strain EC4115 / EHEC)</name>
    <dbReference type="NCBI Taxonomy" id="444450"/>
    <lineage>
        <taxon>Bacteria</taxon>
        <taxon>Pseudomonadati</taxon>
        <taxon>Pseudomonadota</taxon>
        <taxon>Gammaproteobacteria</taxon>
        <taxon>Enterobacterales</taxon>
        <taxon>Enterobacteriaceae</taxon>
        <taxon>Escherichia</taxon>
    </lineage>
</organism>
<keyword id="KW-0997">Cell inner membrane</keyword>
<keyword id="KW-1003">Cell membrane</keyword>
<keyword id="KW-0249">Electron transport</keyword>
<keyword id="KW-0472">Membrane</keyword>
<keyword id="KW-1278">Translocase</keyword>
<keyword id="KW-0812">Transmembrane</keyword>
<keyword id="KW-1133">Transmembrane helix</keyword>
<keyword id="KW-0813">Transport</keyword>
<evidence type="ECO:0000255" key="1">
    <source>
        <dbReference type="HAMAP-Rule" id="MF_00478"/>
    </source>
</evidence>
<dbReference type="EC" id="7.-.-.-" evidence="1"/>
<dbReference type="EMBL" id="CP001164">
    <property type="protein sequence ID" value="ACI35432.1"/>
    <property type="molecule type" value="Genomic_DNA"/>
</dbReference>
<dbReference type="RefSeq" id="WP_001289657.1">
    <property type="nucleotide sequence ID" value="NC_011353.1"/>
</dbReference>
<dbReference type="SMR" id="B5Z466"/>
<dbReference type="GeneID" id="93775784"/>
<dbReference type="KEGG" id="ecf:ECH74115_2344"/>
<dbReference type="HOGENOM" id="CLU_046659_1_0_6"/>
<dbReference type="GO" id="GO:0005886">
    <property type="term" value="C:plasma membrane"/>
    <property type="evidence" value="ECO:0007669"/>
    <property type="project" value="UniProtKB-SubCell"/>
</dbReference>
<dbReference type="GO" id="GO:0022900">
    <property type="term" value="P:electron transport chain"/>
    <property type="evidence" value="ECO:0007669"/>
    <property type="project" value="UniProtKB-UniRule"/>
</dbReference>
<dbReference type="HAMAP" id="MF_00478">
    <property type="entry name" value="RsxE_RnfE"/>
    <property type="match status" value="1"/>
</dbReference>
<dbReference type="InterPro" id="IPR003667">
    <property type="entry name" value="NqrDE/RnfAE"/>
</dbReference>
<dbReference type="InterPro" id="IPR010968">
    <property type="entry name" value="RnfE"/>
</dbReference>
<dbReference type="NCBIfam" id="NF009070">
    <property type="entry name" value="PRK12405.1"/>
    <property type="match status" value="1"/>
</dbReference>
<dbReference type="NCBIfam" id="TIGR01948">
    <property type="entry name" value="rnfE"/>
    <property type="match status" value="1"/>
</dbReference>
<dbReference type="PANTHER" id="PTHR30586">
    <property type="entry name" value="ELECTRON TRANSPORT COMPLEX PROTEIN RNFE"/>
    <property type="match status" value="1"/>
</dbReference>
<dbReference type="PANTHER" id="PTHR30586:SF0">
    <property type="entry name" value="ION-TRANSLOCATING OXIDOREDUCTASE COMPLEX SUBUNIT E"/>
    <property type="match status" value="1"/>
</dbReference>
<dbReference type="Pfam" id="PF02508">
    <property type="entry name" value="Rnf-Nqr"/>
    <property type="match status" value="1"/>
</dbReference>
<dbReference type="PIRSF" id="PIRSF006102">
    <property type="entry name" value="NQR_DE"/>
    <property type="match status" value="1"/>
</dbReference>
<proteinExistence type="inferred from homology"/>
<gene>
    <name evidence="1" type="primary">rsxE</name>
    <name type="synonym">rnfE</name>
    <name type="ordered locus">ECH74115_2344</name>
</gene>
<accession>B5Z466</accession>
<comment type="function">
    <text evidence="1">Part of a membrane-bound complex that couples electron transfer with translocation of ions across the membrane. Required to maintain the reduced state of SoxR.</text>
</comment>
<comment type="subunit">
    <text evidence="1">The complex is composed of six subunits: RsxA, RsxB, RsxC, RsxD, RsxE and RsxG.</text>
</comment>
<comment type="subcellular location">
    <subcellularLocation>
        <location evidence="1">Cell inner membrane</location>
        <topology evidence="1">Multi-pass membrane protein</topology>
    </subcellularLocation>
</comment>
<comment type="similarity">
    <text evidence="1">Belongs to the NqrDE/RnfAE family.</text>
</comment>
<feature type="chain" id="PRO_1000125847" description="Ion-translocating oxidoreductase complex subunit E">
    <location>
        <begin position="1"/>
        <end position="231"/>
    </location>
</feature>
<feature type="transmembrane region" description="Helical" evidence="1">
    <location>
        <begin position="18"/>
        <end position="38"/>
    </location>
</feature>
<feature type="transmembrane region" description="Helical" evidence="1">
    <location>
        <begin position="39"/>
        <end position="59"/>
    </location>
</feature>
<feature type="transmembrane region" description="Helical" evidence="1">
    <location>
        <begin position="63"/>
        <end position="83"/>
    </location>
</feature>
<feature type="transmembrane region" description="Helical" evidence="1">
    <location>
        <begin position="86"/>
        <end position="106"/>
    </location>
</feature>
<feature type="transmembrane region" description="Helical" evidence="1">
    <location>
        <begin position="125"/>
        <end position="145"/>
    </location>
</feature>
<feature type="transmembrane region" description="Helical" evidence="1">
    <location>
        <begin position="182"/>
        <end position="202"/>
    </location>
</feature>